<evidence type="ECO:0000255" key="1">
    <source>
        <dbReference type="HAMAP-Rule" id="MF_02004"/>
    </source>
</evidence>
<gene>
    <name evidence="1" type="primary">valS</name>
    <name type="ordered locus">BC_4465</name>
</gene>
<accession>Q817R6</accession>
<keyword id="KW-0030">Aminoacyl-tRNA synthetase</keyword>
<keyword id="KW-0067">ATP-binding</keyword>
<keyword id="KW-0175">Coiled coil</keyword>
<keyword id="KW-0963">Cytoplasm</keyword>
<keyword id="KW-0436">Ligase</keyword>
<keyword id="KW-0547">Nucleotide-binding</keyword>
<keyword id="KW-0648">Protein biosynthesis</keyword>
<keyword id="KW-1185">Reference proteome</keyword>
<comment type="function">
    <text evidence="1">Catalyzes the attachment of valine to tRNA(Val). As ValRS can inadvertently accommodate and process structurally similar amino acids such as threonine, to avoid such errors, it has a 'posttransfer' editing activity that hydrolyzes mischarged Thr-tRNA(Val) in a tRNA-dependent manner.</text>
</comment>
<comment type="catalytic activity">
    <reaction evidence="1">
        <text>tRNA(Val) + L-valine + ATP = L-valyl-tRNA(Val) + AMP + diphosphate</text>
        <dbReference type="Rhea" id="RHEA:10704"/>
        <dbReference type="Rhea" id="RHEA-COMP:9672"/>
        <dbReference type="Rhea" id="RHEA-COMP:9708"/>
        <dbReference type="ChEBI" id="CHEBI:30616"/>
        <dbReference type="ChEBI" id="CHEBI:33019"/>
        <dbReference type="ChEBI" id="CHEBI:57762"/>
        <dbReference type="ChEBI" id="CHEBI:78442"/>
        <dbReference type="ChEBI" id="CHEBI:78537"/>
        <dbReference type="ChEBI" id="CHEBI:456215"/>
        <dbReference type="EC" id="6.1.1.9"/>
    </reaction>
</comment>
<comment type="subunit">
    <text evidence="1">Monomer.</text>
</comment>
<comment type="subcellular location">
    <subcellularLocation>
        <location evidence="1">Cytoplasm</location>
    </subcellularLocation>
</comment>
<comment type="domain">
    <text evidence="1">ValRS has two distinct active sites: one for aminoacylation and one for editing. The misactivated threonine is translocated from the active site to the editing site.</text>
</comment>
<comment type="domain">
    <text evidence="1">The C-terminal coiled-coil domain is crucial for aminoacylation activity.</text>
</comment>
<comment type="similarity">
    <text evidence="1">Belongs to the class-I aminoacyl-tRNA synthetase family. ValS type 1 subfamily.</text>
</comment>
<name>SYV_BACCR</name>
<dbReference type="EC" id="6.1.1.9" evidence="1"/>
<dbReference type="EMBL" id="AE016877">
    <property type="protein sequence ID" value="AAP11378.1"/>
    <property type="molecule type" value="Genomic_DNA"/>
</dbReference>
<dbReference type="RefSeq" id="NP_834177.1">
    <property type="nucleotide sequence ID" value="NC_004722.1"/>
</dbReference>
<dbReference type="RefSeq" id="WP_000072244.1">
    <property type="nucleotide sequence ID" value="NZ_CP138336.1"/>
</dbReference>
<dbReference type="SMR" id="Q817R6"/>
<dbReference type="STRING" id="226900.BC_4465"/>
<dbReference type="KEGG" id="bce:BC4465"/>
<dbReference type="PATRIC" id="fig|226900.8.peg.4618"/>
<dbReference type="HOGENOM" id="CLU_001493_0_2_9"/>
<dbReference type="OrthoDB" id="9810365at2"/>
<dbReference type="Proteomes" id="UP000001417">
    <property type="component" value="Chromosome"/>
</dbReference>
<dbReference type="GO" id="GO:0005829">
    <property type="term" value="C:cytosol"/>
    <property type="evidence" value="ECO:0000318"/>
    <property type="project" value="GO_Central"/>
</dbReference>
<dbReference type="GO" id="GO:0002161">
    <property type="term" value="F:aminoacyl-tRNA deacylase activity"/>
    <property type="evidence" value="ECO:0007669"/>
    <property type="project" value="InterPro"/>
</dbReference>
<dbReference type="GO" id="GO:0005524">
    <property type="term" value="F:ATP binding"/>
    <property type="evidence" value="ECO:0007669"/>
    <property type="project" value="UniProtKB-UniRule"/>
</dbReference>
<dbReference type="GO" id="GO:0004832">
    <property type="term" value="F:valine-tRNA ligase activity"/>
    <property type="evidence" value="ECO:0000318"/>
    <property type="project" value="GO_Central"/>
</dbReference>
<dbReference type="GO" id="GO:0006438">
    <property type="term" value="P:valyl-tRNA aminoacylation"/>
    <property type="evidence" value="ECO:0000318"/>
    <property type="project" value="GO_Central"/>
</dbReference>
<dbReference type="CDD" id="cd07962">
    <property type="entry name" value="Anticodon_Ia_Val"/>
    <property type="match status" value="1"/>
</dbReference>
<dbReference type="CDD" id="cd00817">
    <property type="entry name" value="ValRS_core"/>
    <property type="match status" value="1"/>
</dbReference>
<dbReference type="FunFam" id="1.10.287.380:FF:000001">
    <property type="entry name" value="Valine--tRNA ligase"/>
    <property type="match status" value="1"/>
</dbReference>
<dbReference type="FunFam" id="1.10.730.10:FF:000014">
    <property type="entry name" value="Valine--tRNA ligase"/>
    <property type="match status" value="1"/>
</dbReference>
<dbReference type="FunFam" id="3.40.50.620:FF:000032">
    <property type="entry name" value="Valine--tRNA ligase"/>
    <property type="match status" value="1"/>
</dbReference>
<dbReference type="FunFam" id="3.40.50.620:FF:000098">
    <property type="entry name" value="Valine--tRNA ligase"/>
    <property type="match status" value="1"/>
</dbReference>
<dbReference type="FunFam" id="3.90.740.10:FF:000005">
    <property type="entry name" value="Valine--tRNA ligase, mitochondrial"/>
    <property type="match status" value="1"/>
</dbReference>
<dbReference type="Gene3D" id="3.40.50.620">
    <property type="entry name" value="HUPs"/>
    <property type="match status" value="2"/>
</dbReference>
<dbReference type="Gene3D" id="1.10.730.10">
    <property type="entry name" value="Isoleucyl-tRNA Synthetase, Domain 1"/>
    <property type="match status" value="1"/>
</dbReference>
<dbReference type="Gene3D" id="1.10.287.380">
    <property type="entry name" value="Valyl-tRNA synthetase, C-terminal domain"/>
    <property type="match status" value="1"/>
</dbReference>
<dbReference type="Gene3D" id="3.90.740.10">
    <property type="entry name" value="Valyl/Leucyl/Isoleucyl-tRNA synthetase, editing domain"/>
    <property type="match status" value="1"/>
</dbReference>
<dbReference type="HAMAP" id="MF_02004">
    <property type="entry name" value="Val_tRNA_synth_type1"/>
    <property type="match status" value="1"/>
</dbReference>
<dbReference type="InterPro" id="IPR001412">
    <property type="entry name" value="aa-tRNA-synth_I_CS"/>
</dbReference>
<dbReference type="InterPro" id="IPR002300">
    <property type="entry name" value="aa-tRNA-synth_Ia"/>
</dbReference>
<dbReference type="InterPro" id="IPR033705">
    <property type="entry name" value="Anticodon_Ia_Val"/>
</dbReference>
<dbReference type="InterPro" id="IPR013155">
    <property type="entry name" value="M/V/L/I-tRNA-synth_anticd-bd"/>
</dbReference>
<dbReference type="InterPro" id="IPR014729">
    <property type="entry name" value="Rossmann-like_a/b/a_fold"/>
</dbReference>
<dbReference type="InterPro" id="IPR010978">
    <property type="entry name" value="tRNA-bd_arm"/>
</dbReference>
<dbReference type="InterPro" id="IPR009080">
    <property type="entry name" value="tRNAsynth_Ia_anticodon-bd"/>
</dbReference>
<dbReference type="InterPro" id="IPR037118">
    <property type="entry name" value="Val-tRNA_synth_C_sf"/>
</dbReference>
<dbReference type="InterPro" id="IPR019499">
    <property type="entry name" value="Val-tRNA_synth_tRNA-bd"/>
</dbReference>
<dbReference type="InterPro" id="IPR009008">
    <property type="entry name" value="Val/Leu/Ile-tRNA-synth_edit"/>
</dbReference>
<dbReference type="InterPro" id="IPR002303">
    <property type="entry name" value="Valyl-tRNA_ligase"/>
</dbReference>
<dbReference type="NCBIfam" id="NF004349">
    <property type="entry name" value="PRK05729.1"/>
    <property type="match status" value="1"/>
</dbReference>
<dbReference type="NCBIfam" id="TIGR00422">
    <property type="entry name" value="valS"/>
    <property type="match status" value="1"/>
</dbReference>
<dbReference type="PANTHER" id="PTHR11946:SF93">
    <property type="entry name" value="VALINE--TRNA LIGASE, CHLOROPLASTIC_MITOCHONDRIAL 2"/>
    <property type="match status" value="1"/>
</dbReference>
<dbReference type="PANTHER" id="PTHR11946">
    <property type="entry name" value="VALYL-TRNA SYNTHETASES"/>
    <property type="match status" value="1"/>
</dbReference>
<dbReference type="Pfam" id="PF08264">
    <property type="entry name" value="Anticodon_1"/>
    <property type="match status" value="1"/>
</dbReference>
<dbReference type="Pfam" id="PF00133">
    <property type="entry name" value="tRNA-synt_1"/>
    <property type="match status" value="2"/>
</dbReference>
<dbReference type="Pfam" id="PF10458">
    <property type="entry name" value="Val_tRNA-synt_C"/>
    <property type="match status" value="1"/>
</dbReference>
<dbReference type="PRINTS" id="PR00986">
    <property type="entry name" value="TRNASYNTHVAL"/>
</dbReference>
<dbReference type="SUPFAM" id="SSF47323">
    <property type="entry name" value="Anticodon-binding domain of a subclass of class I aminoacyl-tRNA synthetases"/>
    <property type="match status" value="1"/>
</dbReference>
<dbReference type="SUPFAM" id="SSF52374">
    <property type="entry name" value="Nucleotidylyl transferase"/>
    <property type="match status" value="1"/>
</dbReference>
<dbReference type="SUPFAM" id="SSF46589">
    <property type="entry name" value="tRNA-binding arm"/>
    <property type="match status" value="1"/>
</dbReference>
<dbReference type="SUPFAM" id="SSF50677">
    <property type="entry name" value="ValRS/IleRS/LeuRS editing domain"/>
    <property type="match status" value="1"/>
</dbReference>
<dbReference type="PROSITE" id="PS00178">
    <property type="entry name" value="AA_TRNA_LIGASE_I"/>
    <property type="match status" value="1"/>
</dbReference>
<sequence length="881" mass="101703">MSNTEKNLPTKYDHMSVEEGLYQWWLEGKYFEATGDEKKQPYTIVIPPPNVTGKLHLGHAWDTTLQDILTRTKRMQGYDVLWLPGMDHAGIATQAKVEGKLREEGISRYDLGREKFLEKAWEWKEEYASHIRQQWGKVGLGLDYSRERFTLDKGLSDAVNKVFVQLYEKGLIYRGEYIINWDPATRTALSDIEVIHKEVQGAFYHMNYPLTDGSGHIRLATTRPETMLGDTAVAVHPEDDRYKHLIGKTVTLPIVGREIPIIADEYVEKDFGTGVVKITPAHDPNDFEVGNRHDLPRILVMNEDGSMNEKAGKYNGMDRFECRKELVKDLQEAGVLVEIEPHMHSVGHSERSGAVVEPYLSTQWFVKMAPLAEKAVALQQKEEEKVTFVPERFENTYLRWMENIHDWCISRQLWWGHRIPAWYHKETGEVYVGTEAPADIENWNQDNDVLDTWFSSALWPFSTLGWPNEDSADFKRYYSTDALVTGYDIIFFWVSRMIFQGLEFTGERPFKDVLIHGLVRDEQGRKMSKSLGNGIDPMDVIEKYGADAMRFFLSTGSAPGQDLRFSMEKVESTWNFINKIWNASRFVLMNMDDMKYEEIDLTGEKSVADKWILTRLNETIESVTRNMDKYEFGEAGRSLYNFIWDDFCDWYIEMAKLPLYGEDEAAKKTTRSILAYVLDQTMRLLHPFMPFVTEKIWQHLPHEGESITVAAWPTVREDLQDTEAAAEMHLLVDIIRSVRNIRAEVNTPMSKKVQMQIKAKDEAVLAQLTKNSSYIERFCNPSELTIQTDLQAPEKAMTAIVSGAELFLPLADLINLDEERARLEKELEKFDKEVERVQKKLSNQGFVAKAPAAVIEGERAKEQDYLEKREAVRQRLADLEK</sequence>
<feature type="chain" id="PRO_0000224432" description="Valine--tRNA ligase">
    <location>
        <begin position="1"/>
        <end position="881"/>
    </location>
</feature>
<feature type="coiled-coil region" evidence="1">
    <location>
        <begin position="810"/>
        <end position="881"/>
    </location>
</feature>
<feature type="short sequence motif" description="'HIGH' region">
    <location>
        <begin position="49"/>
        <end position="59"/>
    </location>
</feature>
<feature type="short sequence motif" description="'KMSKS' region">
    <location>
        <begin position="526"/>
        <end position="530"/>
    </location>
</feature>
<feature type="binding site" evidence="1">
    <location>
        <position position="529"/>
    </location>
    <ligand>
        <name>ATP</name>
        <dbReference type="ChEBI" id="CHEBI:30616"/>
    </ligand>
</feature>
<organism>
    <name type="scientific">Bacillus cereus (strain ATCC 14579 / DSM 31 / CCUG 7414 / JCM 2152 / NBRC 15305 / NCIMB 9373 / NCTC 2599 / NRRL B-3711)</name>
    <dbReference type="NCBI Taxonomy" id="226900"/>
    <lineage>
        <taxon>Bacteria</taxon>
        <taxon>Bacillati</taxon>
        <taxon>Bacillota</taxon>
        <taxon>Bacilli</taxon>
        <taxon>Bacillales</taxon>
        <taxon>Bacillaceae</taxon>
        <taxon>Bacillus</taxon>
        <taxon>Bacillus cereus group</taxon>
    </lineage>
</organism>
<protein>
    <recommendedName>
        <fullName evidence="1">Valine--tRNA ligase</fullName>
        <ecNumber evidence="1">6.1.1.9</ecNumber>
    </recommendedName>
    <alternativeName>
        <fullName evidence="1">Valyl-tRNA synthetase</fullName>
        <shortName evidence="1">ValRS</shortName>
    </alternativeName>
</protein>
<reference key="1">
    <citation type="journal article" date="2003" name="Nature">
        <title>Genome sequence of Bacillus cereus and comparative analysis with Bacillus anthracis.</title>
        <authorList>
            <person name="Ivanova N."/>
            <person name="Sorokin A."/>
            <person name="Anderson I."/>
            <person name="Galleron N."/>
            <person name="Candelon B."/>
            <person name="Kapatral V."/>
            <person name="Bhattacharyya A."/>
            <person name="Reznik G."/>
            <person name="Mikhailova N."/>
            <person name="Lapidus A."/>
            <person name="Chu L."/>
            <person name="Mazur M."/>
            <person name="Goltsman E."/>
            <person name="Larsen N."/>
            <person name="D'Souza M."/>
            <person name="Walunas T."/>
            <person name="Grechkin Y."/>
            <person name="Pusch G."/>
            <person name="Haselkorn R."/>
            <person name="Fonstein M."/>
            <person name="Ehrlich S.D."/>
            <person name="Overbeek R."/>
            <person name="Kyrpides N.C."/>
        </authorList>
    </citation>
    <scope>NUCLEOTIDE SEQUENCE [LARGE SCALE GENOMIC DNA]</scope>
    <source>
        <strain>ATCC 14579 / DSM 31 / CCUG 7414 / JCM 2152 / NBRC 15305 / NCIMB 9373 / NCTC 2599 / NRRL B-3711</strain>
    </source>
</reference>
<proteinExistence type="inferred from homology"/>